<name>RL32_AGRFC</name>
<comment type="similarity">
    <text evidence="1">Belongs to the bacterial ribosomal protein bL32 family.</text>
</comment>
<dbReference type="EMBL" id="AE007869">
    <property type="protein sequence ID" value="AAK85933.2"/>
    <property type="molecule type" value="Genomic_DNA"/>
</dbReference>
<dbReference type="PIR" id="AC2590">
    <property type="entry name" value="AC2590"/>
</dbReference>
<dbReference type="PIR" id="D97372">
    <property type="entry name" value="D97372"/>
</dbReference>
<dbReference type="RefSeq" id="NP_353148.2">
    <property type="nucleotide sequence ID" value="NC_003062.2"/>
</dbReference>
<dbReference type="RefSeq" id="WP_003507205.1">
    <property type="nucleotide sequence ID" value="NC_003062.2"/>
</dbReference>
<dbReference type="SMR" id="Q8UJ26"/>
<dbReference type="STRING" id="176299.Atu0112"/>
<dbReference type="EnsemblBacteria" id="AAK85933">
    <property type="protein sequence ID" value="AAK85933"/>
    <property type="gene ID" value="Atu0112"/>
</dbReference>
<dbReference type="GeneID" id="97365684"/>
<dbReference type="KEGG" id="atu:Atu0112"/>
<dbReference type="PATRIC" id="fig|176299.10.peg.105"/>
<dbReference type="eggNOG" id="COG0333">
    <property type="taxonomic scope" value="Bacteria"/>
</dbReference>
<dbReference type="HOGENOM" id="CLU_129084_2_2_5"/>
<dbReference type="OrthoDB" id="9801927at2"/>
<dbReference type="PhylomeDB" id="Q8UJ26"/>
<dbReference type="PRO" id="PR:Q8UJ26"/>
<dbReference type="Proteomes" id="UP000000813">
    <property type="component" value="Chromosome circular"/>
</dbReference>
<dbReference type="GO" id="GO:0015934">
    <property type="term" value="C:large ribosomal subunit"/>
    <property type="evidence" value="ECO:0007669"/>
    <property type="project" value="InterPro"/>
</dbReference>
<dbReference type="GO" id="GO:0003735">
    <property type="term" value="F:structural constituent of ribosome"/>
    <property type="evidence" value="ECO:0007669"/>
    <property type="project" value="InterPro"/>
</dbReference>
<dbReference type="GO" id="GO:0006412">
    <property type="term" value="P:translation"/>
    <property type="evidence" value="ECO:0007669"/>
    <property type="project" value="UniProtKB-UniRule"/>
</dbReference>
<dbReference type="Gene3D" id="1.20.5.640">
    <property type="entry name" value="Single helix bin"/>
    <property type="match status" value="1"/>
</dbReference>
<dbReference type="HAMAP" id="MF_00340">
    <property type="entry name" value="Ribosomal_bL32"/>
    <property type="match status" value="1"/>
</dbReference>
<dbReference type="InterPro" id="IPR002677">
    <property type="entry name" value="Ribosomal_bL32"/>
</dbReference>
<dbReference type="InterPro" id="IPR044957">
    <property type="entry name" value="Ribosomal_bL32_bact"/>
</dbReference>
<dbReference type="InterPro" id="IPR011332">
    <property type="entry name" value="Ribosomal_zn-bd"/>
</dbReference>
<dbReference type="NCBIfam" id="TIGR01031">
    <property type="entry name" value="rpmF_bact"/>
    <property type="match status" value="1"/>
</dbReference>
<dbReference type="PANTHER" id="PTHR35534">
    <property type="entry name" value="50S RIBOSOMAL PROTEIN L32"/>
    <property type="match status" value="1"/>
</dbReference>
<dbReference type="PANTHER" id="PTHR35534:SF1">
    <property type="entry name" value="LARGE RIBOSOMAL SUBUNIT PROTEIN BL32"/>
    <property type="match status" value="1"/>
</dbReference>
<dbReference type="Pfam" id="PF01783">
    <property type="entry name" value="Ribosomal_L32p"/>
    <property type="match status" value="1"/>
</dbReference>
<dbReference type="SUPFAM" id="SSF57829">
    <property type="entry name" value="Zn-binding ribosomal proteins"/>
    <property type="match status" value="1"/>
</dbReference>
<protein>
    <recommendedName>
        <fullName evidence="1">Large ribosomal subunit protein bL32</fullName>
    </recommendedName>
    <alternativeName>
        <fullName evidence="3">50S ribosomal protein L32</fullName>
    </alternativeName>
</protein>
<reference key="1">
    <citation type="journal article" date="2001" name="Science">
        <title>The genome of the natural genetic engineer Agrobacterium tumefaciens C58.</title>
        <authorList>
            <person name="Wood D.W."/>
            <person name="Setubal J.C."/>
            <person name="Kaul R."/>
            <person name="Monks D.E."/>
            <person name="Kitajima J.P."/>
            <person name="Okura V.K."/>
            <person name="Zhou Y."/>
            <person name="Chen L."/>
            <person name="Wood G.E."/>
            <person name="Almeida N.F. Jr."/>
            <person name="Woo L."/>
            <person name="Chen Y."/>
            <person name="Paulsen I.T."/>
            <person name="Eisen J.A."/>
            <person name="Karp P.D."/>
            <person name="Bovee D. Sr."/>
            <person name="Chapman P."/>
            <person name="Clendenning J."/>
            <person name="Deatherage G."/>
            <person name="Gillet W."/>
            <person name="Grant C."/>
            <person name="Kutyavin T."/>
            <person name="Levy R."/>
            <person name="Li M.-J."/>
            <person name="McClelland E."/>
            <person name="Palmieri A."/>
            <person name="Raymond C."/>
            <person name="Rouse G."/>
            <person name="Saenphimmachak C."/>
            <person name="Wu Z."/>
            <person name="Romero P."/>
            <person name="Gordon D."/>
            <person name="Zhang S."/>
            <person name="Yoo H."/>
            <person name="Tao Y."/>
            <person name="Biddle P."/>
            <person name="Jung M."/>
            <person name="Krespan W."/>
            <person name="Perry M."/>
            <person name="Gordon-Kamm B."/>
            <person name="Liao L."/>
            <person name="Kim S."/>
            <person name="Hendrick C."/>
            <person name="Zhao Z.-Y."/>
            <person name="Dolan M."/>
            <person name="Chumley F."/>
            <person name="Tingey S.V."/>
            <person name="Tomb J.-F."/>
            <person name="Gordon M.P."/>
            <person name="Olson M.V."/>
            <person name="Nester E.W."/>
        </authorList>
    </citation>
    <scope>NUCLEOTIDE SEQUENCE [LARGE SCALE GENOMIC DNA]</scope>
    <source>
        <strain>C58 / ATCC 33970</strain>
    </source>
</reference>
<reference key="2">
    <citation type="journal article" date="2001" name="Science">
        <title>Genome sequence of the plant pathogen and biotechnology agent Agrobacterium tumefaciens C58.</title>
        <authorList>
            <person name="Goodner B."/>
            <person name="Hinkle G."/>
            <person name="Gattung S."/>
            <person name="Miller N."/>
            <person name="Blanchard M."/>
            <person name="Qurollo B."/>
            <person name="Goldman B.S."/>
            <person name="Cao Y."/>
            <person name="Askenazi M."/>
            <person name="Halling C."/>
            <person name="Mullin L."/>
            <person name="Houmiel K."/>
            <person name="Gordon J."/>
            <person name="Vaudin M."/>
            <person name="Iartchouk O."/>
            <person name="Epp A."/>
            <person name="Liu F."/>
            <person name="Wollam C."/>
            <person name="Allinger M."/>
            <person name="Doughty D."/>
            <person name="Scott C."/>
            <person name="Lappas C."/>
            <person name="Markelz B."/>
            <person name="Flanagan C."/>
            <person name="Crowell C."/>
            <person name="Gurson J."/>
            <person name="Lomo C."/>
            <person name="Sear C."/>
            <person name="Strub G."/>
            <person name="Cielo C."/>
            <person name="Slater S."/>
        </authorList>
    </citation>
    <scope>NUCLEOTIDE SEQUENCE [LARGE SCALE GENOMIC DNA]</scope>
    <source>
        <strain>C58 / ATCC 33970</strain>
    </source>
</reference>
<sequence>MAVPKRKTSPSKRGMRRSADGLKSATYVEDKNSGELRRPHHIDLKTGMYRGRQVLTPKESA</sequence>
<evidence type="ECO:0000255" key="1">
    <source>
        <dbReference type="HAMAP-Rule" id="MF_00340"/>
    </source>
</evidence>
<evidence type="ECO:0000256" key="2">
    <source>
        <dbReference type="SAM" id="MobiDB-lite"/>
    </source>
</evidence>
<evidence type="ECO:0000305" key="3"/>
<gene>
    <name evidence="1" type="primary">rpmF</name>
    <name type="ordered locus">Atu0112</name>
    <name type="ORF">AGR_C_173</name>
</gene>
<proteinExistence type="inferred from homology"/>
<feature type="chain" id="PRO_0000172298" description="Large ribosomal subunit protein bL32">
    <location>
        <begin position="1"/>
        <end position="61"/>
    </location>
</feature>
<feature type="region of interest" description="Disordered" evidence="2">
    <location>
        <begin position="1"/>
        <end position="35"/>
    </location>
</feature>
<feature type="compositionally biased region" description="Basic residues" evidence="2">
    <location>
        <begin position="1"/>
        <end position="16"/>
    </location>
</feature>
<accession>Q8UJ26</accession>
<organism>
    <name type="scientific">Agrobacterium fabrum (strain C58 / ATCC 33970)</name>
    <name type="common">Agrobacterium tumefaciens (strain C58)</name>
    <dbReference type="NCBI Taxonomy" id="176299"/>
    <lineage>
        <taxon>Bacteria</taxon>
        <taxon>Pseudomonadati</taxon>
        <taxon>Pseudomonadota</taxon>
        <taxon>Alphaproteobacteria</taxon>
        <taxon>Hyphomicrobiales</taxon>
        <taxon>Rhizobiaceae</taxon>
        <taxon>Rhizobium/Agrobacterium group</taxon>
        <taxon>Agrobacterium</taxon>
        <taxon>Agrobacterium tumefaciens complex</taxon>
    </lineage>
</organism>
<keyword id="KW-1185">Reference proteome</keyword>
<keyword id="KW-0687">Ribonucleoprotein</keyword>
<keyword id="KW-0689">Ribosomal protein</keyword>